<sequence>MNLSGLNMRGLLLADEPMSRHTSLRVGGPADLFAIPEDADDLQGLLRQLKERGIPWLAIGRGNNLLVRDSGIRGAVISLERFNRVEALGQGRIRAGAGAENLAVVRFAQEQGLGGIGFISGIPGTVGGAIRMNAGAYGTGIMERTESLTLLHDGNVREFGRDELEYGYRHLDLAAGDIILEALFRLDQREAEQTEEEIRKDLELRRAKHSVGFPSAGSFFKNPAGQTAWRLIDATGMRGERVGGAQVSQVHSNFLVNTGGATAGDFLELSRVVKKAVLASCGVTLEEEVRIVGEE</sequence>
<name>MURB_PELPD</name>
<reference key="1">
    <citation type="submission" date="2006-10" db="EMBL/GenBank/DDBJ databases">
        <title>Complete sequence of chromosome of Pelobacter propionicus DSM 2379.</title>
        <authorList>
            <consortium name="US DOE Joint Genome Institute"/>
            <person name="Copeland A."/>
            <person name="Lucas S."/>
            <person name="Lapidus A."/>
            <person name="Barry K."/>
            <person name="Detter J.C."/>
            <person name="Glavina del Rio T."/>
            <person name="Hammon N."/>
            <person name="Israni S."/>
            <person name="Dalin E."/>
            <person name="Tice H."/>
            <person name="Pitluck S."/>
            <person name="Saunders E."/>
            <person name="Brettin T."/>
            <person name="Bruce D."/>
            <person name="Han C."/>
            <person name="Tapia R."/>
            <person name="Schmutz J."/>
            <person name="Larimer F."/>
            <person name="Land M."/>
            <person name="Hauser L."/>
            <person name="Kyrpides N."/>
            <person name="Kim E."/>
            <person name="Lovley D."/>
            <person name="Richardson P."/>
        </authorList>
    </citation>
    <scope>NUCLEOTIDE SEQUENCE [LARGE SCALE GENOMIC DNA]</scope>
    <source>
        <strain>DSM 2379 / NBRC 103807 / OttBd1</strain>
    </source>
</reference>
<dbReference type="EC" id="1.3.1.98" evidence="1"/>
<dbReference type="EMBL" id="CP000482">
    <property type="protein sequence ID" value="ABL00880.1"/>
    <property type="molecule type" value="Genomic_DNA"/>
</dbReference>
<dbReference type="SMR" id="A1AU59"/>
<dbReference type="STRING" id="338966.Ppro_3287"/>
<dbReference type="KEGG" id="ppd:Ppro_3287"/>
<dbReference type="eggNOG" id="COG0812">
    <property type="taxonomic scope" value="Bacteria"/>
</dbReference>
<dbReference type="HOGENOM" id="CLU_035304_1_1_7"/>
<dbReference type="OrthoDB" id="9804753at2"/>
<dbReference type="UniPathway" id="UPA00219"/>
<dbReference type="Proteomes" id="UP000006732">
    <property type="component" value="Chromosome"/>
</dbReference>
<dbReference type="GO" id="GO:0005829">
    <property type="term" value="C:cytosol"/>
    <property type="evidence" value="ECO:0007669"/>
    <property type="project" value="TreeGrafter"/>
</dbReference>
<dbReference type="GO" id="GO:0071949">
    <property type="term" value="F:FAD binding"/>
    <property type="evidence" value="ECO:0007669"/>
    <property type="project" value="InterPro"/>
</dbReference>
<dbReference type="GO" id="GO:0008762">
    <property type="term" value="F:UDP-N-acetylmuramate dehydrogenase activity"/>
    <property type="evidence" value="ECO:0007669"/>
    <property type="project" value="UniProtKB-UniRule"/>
</dbReference>
<dbReference type="GO" id="GO:0051301">
    <property type="term" value="P:cell division"/>
    <property type="evidence" value="ECO:0007669"/>
    <property type="project" value="UniProtKB-KW"/>
</dbReference>
<dbReference type="GO" id="GO:0071555">
    <property type="term" value="P:cell wall organization"/>
    <property type="evidence" value="ECO:0007669"/>
    <property type="project" value="UniProtKB-KW"/>
</dbReference>
<dbReference type="GO" id="GO:0009252">
    <property type="term" value="P:peptidoglycan biosynthetic process"/>
    <property type="evidence" value="ECO:0007669"/>
    <property type="project" value="UniProtKB-UniRule"/>
</dbReference>
<dbReference type="GO" id="GO:0008360">
    <property type="term" value="P:regulation of cell shape"/>
    <property type="evidence" value="ECO:0007669"/>
    <property type="project" value="UniProtKB-KW"/>
</dbReference>
<dbReference type="Gene3D" id="3.30.465.10">
    <property type="match status" value="1"/>
</dbReference>
<dbReference type="Gene3D" id="3.90.78.10">
    <property type="entry name" value="UDP-N-acetylenolpyruvoylglucosamine reductase, C-terminal domain"/>
    <property type="match status" value="1"/>
</dbReference>
<dbReference type="Gene3D" id="3.30.43.10">
    <property type="entry name" value="Uridine Diphospho-n-acetylenolpyruvylglucosamine Reductase, domain 2"/>
    <property type="match status" value="1"/>
</dbReference>
<dbReference type="HAMAP" id="MF_00037">
    <property type="entry name" value="MurB"/>
    <property type="match status" value="1"/>
</dbReference>
<dbReference type="InterPro" id="IPR016166">
    <property type="entry name" value="FAD-bd_PCMH"/>
</dbReference>
<dbReference type="InterPro" id="IPR036318">
    <property type="entry name" value="FAD-bd_PCMH-like_sf"/>
</dbReference>
<dbReference type="InterPro" id="IPR016167">
    <property type="entry name" value="FAD-bd_PCMH_sub1"/>
</dbReference>
<dbReference type="InterPro" id="IPR016169">
    <property type="entry name" value="FAD-bd_PCMH_sub2"/>
</dbReference>
<dbReference type="InterPro" id="IPR003170">
    <property type="entry name" value="MurB"/>
</dbReference>
<dbReference type="InterPro" id="IPR011601">
    <property type="entry name" value="MurB_C"/>
</dbReference>
<dbReference type="InterPro" id="IPR036635">
    <property type="entry name" value="MurB_C_sf"/>
</dbReference>
<dbReference type="InterPro" id="IPR006094">
    <property type="entry name" value="Oxid_FAD_bind_N"/>
</dbReference>
<dbReference type="NCBIfam" id="TIGR00179">
    <property type="entry name" value="murB"/>
    <property type="match status" value="1"/>
</dbReference>
<dbReference type="NCBIfam" id="NF010480">
    <property type="entry name" value="PRK13905.1"/>
    <property type="match status" value="1"/>
</dbReference>
<dbReference type="PANTHER" id="PTHR21071">
    <property type="entry name" value="UDP-N-ACETYLENOLPYRUVOYLGLUCOSAMINE REDUCTASE"/>
    <property type="match status" value="1"/>
</dbReference>
<dbReference type="PANTHER" id="PTHR21071:SF4">
    <property type="entry name" value="UDP-N-ACETYLENOLPYRUVOYLGLUCOSAMINE REDUCTASE"/>
    <property type="match status" value="1"/>
</dbReference>
<dbReference type="Pfam" id="PF01565">
    <property type="entry name" value="FAD_binding_4"/>
    <property type="match status" value="1"/>
</dbReference>
<dbReference type="Pfam" id="PF02873">
    <property type="entry name" value="MurB_C"/>
    <property type="match status" value="1"/>
</dbReference>
<dbReference type="SUPFAM" id="SSF56176">
    <property type="entry name" value="FAD-binding/transporter-associated domain-like"/>
    <property type="match status" value="1"/>
</dbReference>
<dbReference type="SUPFAM" id="SSF56194">
    <property type="entry name" value="Uridine diphospho-N-Acetylenolpyruvylglucosamine reductase, MurB, C-terminal domain"/>
    <property type="match status" value="1"/>
</dbReference>
<dbReference type="PROSITE" id="PS51387">
    <property type="entry name" value="FAD_PCMH"/>
    <property type="match status" value="1"/>
</dbReference>
<evidence type="ECO:0000255" key="1">
    <source>
        <dbReference type="HAMAP-Rule" id="MF_00037"/>
    </source>
</evidence>
<comment type="function">
    <text evidence="1">Cell wall formation.</text>
</comment>
<comment type="catalytic activity">
    <reaction evidence="1">
        <text>UDP-N-acetyl-alpha-D-muramate + NADP(+) = UDP-N-acetyl-3-O-(1-carboxyvinyl)-alpha-D-glucosamine + NADPH + H(+)</text>
        <dbReference type="Rhea" id="RHEA:12248"/>
        <dbReference type="ChEBI" id="CHEBI:15378"/>
        <dbReference type="ChEBI" id="CHEBI:57783"/>
        <dbReference type="ChEBI" id="CHEBI:58349"/>
        <dbReference type="ChEBI" id="CHEBI:68483"/>
        <dbReference type="ChEBI" id="CHEBI:70757"/>
        <dbReference type="EC" id="1.3.1.98"/>
    </reaction>
</comment>
<comment type="cofactor">
    <cofactor evidence="1">
        <name>FAD</name>
        <dbReference type="ChEBI" id="CHEBI:57692"/>
    </cofactor>
</comment>
<comment type="pathway">
    <text evidence="1">Cell wall biogenesis; peptidoglycan biosynthesis.</text>
</comment>
<comment type="subcellular location">
    <subcellularLocation>
        <location evidence="1">Cytoplasm</location>
    </subcellularLocation>
</comment>
<comment type="similarity">
    <text evidence="1">Belongs to the MurB family.</text>
</comment>
<keyword id="KW-0131">Cell cycle</keyword>
<keyword id="KW-0132">Cell division</keyword>
<keyword id="KW-0133">Cell shape</keyword>
<keyword id="KW-0961">Cell wall biogenesis/degradation</keyword>
<keyword id="KW-0963">Cytoplasm</keyword>
<keyword id="KW-0274">FAD</keyword>
<keyword id="KW-0285">Flavoprotein</keyword>
<keyword id="KW-0521">NADP</keyword>
<keyword id="KW-0560">Oxidoreductase</keyword>
<keyword id="KW-0573">Peptidoglycan synthesis</keyword>
<keyword id="KW-1185">Reference proteome</keyword>
<feature type="chain" id="PRO_0000332487" description="UDP-N-acetylenolpyruvoylglucosamine reductase">
    <location>
        <begin position="1"/>
        <end position="295"/>
    </location>
</feature>
<feature type="domain" description="FAD-binding PCMH-type" evidence="1">
    <location>
        <begin position="25"/>
        <end position="189"/>
    </location>
</feature>
<feature type="active site" evidence="1">
    <location>
        <position position="169"/>
    </location>
</feature>
<feature type="active site" description="Proton donor" evidence="1">
    <location>
        <position position="218"/>
    </location>
</feature>
<feature type="active site" evidence="1">
    <location>
        <position position="288"/>
    </location>
</feature>
<protein>
    <recommendedName>
        <fullName evidence="1">UDP-N-acetylenolpyruvoylglucosamine reductase</fullName>
        <ecNumber evidence="1">1.3.1.98</ecNumber>
    </recommendedName>
    <alternativeName>
        <fullName evidence="1">UDP-N-acetylmuramate dehydrogenase</fullName>
    </alternativeName>
</protein>
<gene>
    <name evidence="1" type="primary">murB</name>
    <name type="ordered locus">Ppro_3287</name>
</gene>
<proteinExistence type="inferred from homology"/>
<organism>
    <name type="scientific">Pelobacter propionicus (strain DSM 2379 / NBRC 103807 / OttBd1)</name>
    <dbReference type="NCBI Taxonomy" id="338966"/>
    <lineage>
        <taxon>Bacteria</taxon>
        <taxon>Pseudomonadati</taxon>
        <taxon>Thermodesulfobacteriota</taxon>
        <taxon>Desulfuromonadia</taxon>
        <taxon>Desulfuromonadales</taxon>
        <taxon>Desulfuromonadaceae</taxon>
        <taxon>Pelobacter</taxon>
    </lineage>
</organism>
<accession>A1AU59</accession>